<evidence type="ECO:0000255" key="1">
    <source>
        <dbReference type="HAMAP-Rule" id="MF_01685"/>
    </source>
</evidence>
<evidence type="ECO:0000305" key="2"/>
<sequence>MLIVGAGPAGLYGAYYAGFRGMSVALMDSLPEAGGQVTAMYPEKVIYDVAGFPAIRGRELVDALVTQAAQFDPTYLLDQQAAELAHEPDAVVVTSSQGHRVRARVVVITGGLGTFTPRPLPTGTGHLGRGLVYFVPKLDVYADQDVIVVGGGDSAFDWALALEPIARSVTLVHRRDRFRAHAATIERVEASRVEILTFSEVAAIHGEDRIEKVELVQTRTGDRHVRPAQAVVAALGFTADLGPLTRWGLTMARRHIAVDSTMFTGVDRVFAAGDITEYPGKVRLIATGFGEVATAVNNAAPVVDPAAKVFPGHSSGDSTAS</sequence>
<accession>Q0RRX8</accession>
<gene>
    <name type="ordered locus">FRAAL1022</name>
</gene>
<organism>
    <name type="scientific">Frankia alni (strain DSM 45986 / CECT 9034 / ACN14a)</name>
    <dbReference type="NCBI Taxonomy" id="326424"/>
    <lineage>
        <taxon>Bacteria</taxon>
        <taxon>Bacillati</taxon>
        <taxon>Actinomycetota</taxon>
        <taxon>Actinomycetes</taxon>
        <taxon>Frankiales</taxon>
        <taxon>Frankiaceae</taxon>
        <taxon>Frankia</taxon>
    </lineage>
</organism>
<protein>
    <recommendedName>
        <fullName evidence="1">Ferredoxin--NADP reductase</fullName>
        <shortName evidence="1">FNR</shortName>
        <shortName evidence="1">Fd-NADP(+) reductase</shortName>
        <ecNumber evidence="1">1.18.1.2</ecNumber>
    </recommendedName>
</protein>
<proteinExistence type="inferred from homology"/>
<comment type="catalytic activity">
    <reaction evidence="1">
        <text>2 reduced [2Fe-2S]-[ferredoxin] + NADP(+) + H(+) = 2 oxidized [2Fe-2S]-[ferredoxin] + NADPH</text>
        <dbReference type="Rhea" id="RHEA:20125"/>
        <dbReference type="Rhea" id="RHEA-COMP:10000"/>
        <dbReference type="Rhea" id="RHEA-COMP:10001"/>
        <dbReference type="ChEBI" id="CHEBI:15378"/>
        <dbReference type="ChEBI" id="CHEBI:33737"/>
        <dbReference type="ChEBI" id="CHEBI:33738"/>
        <dbReference type="ChEBI" id="CHEBI:57783"/>
        <dbReference type="ChEBI" id="CHEBI:58349"/>
        <dbReference type="EC" id="1.18.1.2"/>
    </reaction>
</comment>
<comment type="cofactor">
    <cofactor evidence="1">
        <name>FAD</name>
        <dbReference type="ChEBI" id="CHEBI:57692"/>
    </cofactor>
    <text evidence="1">Binds 1 FAD per subunit.</text>
</comment>
<comment type="subunit">
    <text evidence="1">Homodimer.</text>
</comment>
<comment type="similarity">
    <text evidence="1">Belongs to the ferredoxin--NADP reductase type 2 family.</text>
</comment>
<comment type="sequence caution" evidence="2">
    <conflict type="erroneous initiation">
        <sequence resource="EMBL-CDS" id="CAJ59687"/>
    </conflict>
</comment>
<name>FENR_FRAAA</name>
<reference key="1">
    <citation type="journal article" date="2007" name="Genome Res.">
        <title>Genome characteristics of facultatively symbiotic Frankia sp. strains reflect host range and host plant biogeography.</title>
        <authorList>
            <person name="Normand P."/>
            <person name="Lapierre P."/>
            <person name="Tisa L.S."/>
            <person name="Gogarten J.P."/>
            <person name="Alloisio N."/>
            <person name="Bagnarol E."/>
            <person name="Bassi C.A."/>
            <person name="Berry A.M."/>
            <person name="Bickhart D.M."/>
            <person name="Choisne N."/>
            <person name="Couloux A."/>
            <person name="Cournoyer B."/>
            <person name="Cruveiller S."/>
            <person name="Daubin V."/>
            <person name="Demange N."/>
            <person name="Francino M.P."/>
            <person name="Goltsman E."/>
            <person name="Huang Y."/>
            <person name="Kopp O.R."/>
            <person name="Labarre L."/>
            <person name="Lapidus A."/>
            <person name="Lavire C."/>
            <person name="Marechal J."/>
            <person name="Martinez M."/>
            <person name="Mastronunzio J.E."/>
            <person name="Mullin B.C."/>
            <person name="Niemann J."/>
            <person name="Pujic P."/>
            <person name="Rawnsley T."/>
            <person name="Rouy Z."/>
            <person name="Schenowitz C."/>
            <person name="Sellstedt A."/>
            <person name="Tavares F."/>
            <person name="Tomkins J.P."/>
            <person name="Vallenet D."/>
            <person name="Valverde C."/>
            <person name="Wall L.G."/>
            <person name="Wang Y."/>
            <person name="Medigue C."/>
            <person name="Benson D.R."/>
        </authorList>
    </citation>
    <scope>NUCLEOTIDE SEQUENCE [LARGE SCALE GENOMIC DNA]</scope>
    <source>
        <strain>DSM 45986 / CECT 9034 / ACN14a</strain>
    </source>
</reference>
<feature type="chain" id="PRO_0000364838" description="Ferredoxin--NADP reductase">
    <location>
        <begin position="1"/>
        <end position="321"/>
    </location>
</feature>
<feature type="binding site" evidence="1">
    <location>
        <position position="28"/>
    </location>
    <ligand>
        <name>FAD</name>
        <dbReference type="ChEBI" id="CHEBI:57692"/>
    </ligand>
</feature>
<feature type="binding site" evidence="1">
    <location>
        <position position="36"/>
    </location>
    <ligand>
        <name>FAD</name>
        <dbReference type="ChEBI" id="CHEBI:57692"/>
    </ligand>
</feature>
<feature type="binding site" evidence="1">
    <location>
        <position position="41"/>
    </location>
    <ligand>
        <name>FAD</name>
        <dbReference type="ChEBI" id="CHEBI:57692"/>
    </ligand>
</feature>
<feature type="binding site" evidence="1">
    <location>
        <position position="81"/>
    </location>
    <ligand>
        <name>FAD</name>
        <dbReference type="ChEBI" id="CHEBI:57692"/>
    </ligand>
</feature>
<feature type="binding site" evidence="1">
    <location>
        <position position="115"/>
    </location>
    <ligand>
        <name>FAD</name>
        <dbReference type="ChEBI" id="CHEBI:57692"/>
    </ligand>
</feature>
<feature type="binding site" evidence="1">
    <location>
        <position position="274"/>
    </location>
    <ligand>
        <name>FAD</name>
        <dbReference type="ChEBI" id="CHEBI:57692"/>
    </ligand>
</feature>
<feature type="binding site" evidence="1">
    <location>
        <position position="315"/>
    </location>
    <ligand>
        <name>FAD</name>
        <dbReference type="ChEBI" id="CHEBI:57692"/>
    </ligand>
</feature>
<keyword id="KW-0274">FAD</keyword>
<keyword id="KW-0285">Flavoprotein</keyword>
<keyword id="KW-0521">NADP</keyword>
<keyword id="KW-0560">Oxidoreductase</keyword>
<keyword id="KW-1185">Reference proteome</keyword>
<dbReference type="EC" id="1.18.1.2" evidence="1"/>
<dbReference type="EMBL" id="CT573213">
    <property type="protein sequence ID" value="CAJ59687.1"/>
    <property type="status" value="ALT_INIT"/>
    <property type="molecule type" value="Genomic_DNA"/>
</dbReference>
<dbReference type="RefSeq" id="WP_173402723.1">
    <property type="nucleotide sequence ID" value="NC_008278.1"/>
</dbReference>
<dbReference type="SMR" id="Q0RRX8"/>
<dbReference type="STRING" id="326424.FRAAL1022"/>
<dbReference type="KEGG" id="fal:FRAAL1022"/>
<dbReference type="eggNOG" id="COG0492">
    <property type="taxonomic scope" value="Bacteria"/>
</dbReference>
<dbReference type="HOGENOM" id="CLU_031864_5_5_11"/>
<dbReference type="Proteomes" id="UP000000657">
    <property type="component" value="Chromosome"/>
</dbReference>
<dbReference type="GO" id="GO:0004324">
    <property type="term" value="F:ferredoxin-NADP+ reductase activity"/>
    <property type="evidence" value="ECO:0007669"/>
    <property type="project" value="UniProtKB-UniRule"/>
</dbReference>
<dbReference type="GO" id="GO:0050660">
    <property type="term" value="F:flavin adenine dinucleotide binding"/>
    <property type="evidence" value="ECO:0007669"/>
    <property type="project" value="UniProtKB-UniRule"/>
</dbReference>
<dbReference type="GO" id="GO:0050661">
    <property type="term" value="F:NADP binding"/>
    <property type="evidence" value="ECO:0007669"/>
    <property type="project" value="UniProtKB-UniRule"/>
</dbReference>
<dbReference type="Gene3D" id="3.50.50.60">
    <property type="entry name" value="FAD/NAD(P)-binding domain"/>
    <property type="match status" value="2"/>
</dbReference>
<dbReference type="HAMAP" id="MF_01685">
    <property type="entry name" value="FENR2"/>
    <property type="match status" value="1"/>
</dbReference>
<dbReference type="InterPro" id="IPR036188">
    <property type="entry name" value="FAD/NAD-bd_sf"/>
</dbReference>
<dbReference type="InterPro" id="IPR023753">
    <property type="entry name" value="FAD/NAD-binding_dom"/>
</dbReference>
<dbReference type="InterPro" id="IPR022890">
    <property type="entry name" value="Fd--NADP_Rdtase_type_2"/>
</dbReference>
<dbReference type="InterPro" id="IPR050097">
    <property type="entry name" value="Ferredoxin-NADP_redctase_2"/>
</dbReference>
<dbReference type="PANTHER" id="PTHR48105">
    <property type="entry name" value="THIOREDOXIN REDUCTASE 1-RELATED-RELATED"/>
    <property type="match status" value="1"/>
</dbReference>
<dbReference type="Pfam" id="PF07992">
    <property type="entry name" value="Pyr_redox_2"/>
    <property type="match status" value="1"/>
</dbReference>
<dbReference type="PRINTS" id="PR00368">
    <property type="entry name" value="FADPNR"/>
</dbReference>
<dbReference type="PRINTS" id="PR00469">
    <property type="entry name" value="PNDRDTASEII"/>
</dbReference>
<dbReference type="SUPFAM" id="SSF51905">
    <property type="entry name" value="FAD/NAD(P)-binding domain"/>
    <property type="match status" value="1"/>
</dbReference>